<reference key="1">
    <citation type="journal article" date="2005" name="Genome Res.">
        <title>The Chlamydophila abortus genome sequence reveals an array of variable proteins that contribute to interspecies variation.</title>
        <authorList>
            <person name="Thomson N.R."/>
            <person name="Yeats C."/>
            <person name="Bell K."/>
            <person name="Holden M.T.G."/>
            <person name="Bentley S.D."/>
            <person name="Livingstone M."/>
            <person name="Cerdeno-Tarraga A.-M."/>
            <person name="Harris B."/>
            <person name="Doggett J."/>
            <person name="Ormond D."/>
            <person name="Mungall K."/>
            <person name="Clarke K."/>
            <person name="Feltwell T."/>
            <person name="Hance Z."/>
            <person name="Sanders M."/>
            <person name="Quail M.A."/>
            <person name="Price C."/>
            <person name="Barrell B.G."/>
            <person name="Parkhill J."/>
            <person name="Longbottom D."/>
        </authorList>
    </citation>
    <scope>NUCLEOTIDE SEQUENCE [LARGE SCALE GENOMIC DNA]</scope>
    <source>
        <strain>DSM 27085 / S26/3</strain>
    </source>
</reference>
<name>Y604_CHLAB</name>
<feature type="chain" id="PRO_0000258814" description="UPF0301 protein CAB604">
    <location>
        <begin position="1"/>
        <end position="189"/>
    </location>
</feature>
<dbReference type="EMBL" id="CR848038">
    <property type="protein sequence ID" value="CAH64051.1"/>
    <property type="molecule type" value="Genomic_DNA"/>
</dbReference>
<dbReference type="RefSeq" id="WP_011097197.1">
    <property type="nucleotide sequence ID" value="NC_004552.2"/>
</dbReference>
<dbReference type="SMR" id="Q5L5N9"/>
<dbReference type="GeneID" id="93024153"/>
<dbReference type="KEGG" id="cab:CAB604"/>
<dbReference type="eggNOG" id="COG1678">
    <property type="taxonomic scope" value="Bacteria"/>
</dbReference>
<dbReference type="HOGENOM" id="CLU_057596_2_1_0"/>
<dbReference type="OrthoDB" id="9807486at2"/>
<dbReference type="Proteomes" id="UP000001012">
    <property type="component" value="Chromosome"/>
</dbReference>
<dbReference type="GO" id="GO:0005829">
    <property type="term" value="C:cytosol"/>
    <property type="evidence" value="ECO:0007669"/>
    <property type="project" value="TreeGrafter"/>
</dbReference>
<dbReference type="Gene3D" id="3.40.1740.10">
    <property type="entry name" value="VC0467-like"/>
    <property type="match status" value="1"/>
</dbReference>
<dbReference type="HAMAP" id="MF_00758">
    <property type="entry name" value="UPF0301"/>
    <property type="match status" value="1"/>
</dbReference>
<dbReference type="InterPro" id="IPR003774">
    <property type="entry name" value="AlgH-like"/>
</dbReference>
<dbReference type="NCBIfam" id="NF001271">
    <property type="entry name" value="PRK00228.2-3"/>
    <property type="match status" value="1"/>
</dbReference>
<dbReference type="PANTHER" id="PTHR30327">
    <property type="entry name" value="UNCHARACTERIZED PROTEIN YQGE"/>
    <property type="match status" value="1"/>
</dbReference>
<dbReference type="PANTHER" id="PTHR30327:SF1">
    <property type="entry name" value="UPF0301 PROTEIN YQGE"/>
    <property type="match status" value="1"/>
</dbReference>
<dbReference type="Pfam" id="PF02622">
    <property type="entry name" value="DUF179"/>
    <property type="match status" value="1"/>
</dbReference>
<dbReference type="SUPFAM" id="SSF143456">
    <property type="entry name" value="VC0467-like"/>
    <property type="match status" value="1"/>
</dbReference>
<proteinExistence type="inferred from homology"/>
<gene>
    <name type="ordered locus">CAB604</name>
</gene>
<sequence>MAKIPYAILEKGSLLLASPDTDQGVFARSVILLCEHSLNGSFGLILNKTLGLEISDDIFPVDKVSNNNIRFCMGGPLQANQMMLLHSCSEIPEQTLEICPSVYLGGDLSFLQEIASSEAGPMINLCFGYSGWQAGQLEREFLDGNWFLAPASYEYVFTDSPENLWSMILKDLGGKYASLSTVPENLLLN</sequence>
<protein>
    <recommendedName>
        <fullName evidence="1">UPF0301 protein CAB604</fullName>
    </recommendedName>
</protein>
<comment type="similarity">
    <text evidence="1">Belongs to the UPF0301 (AlgH) family.</text>
</comment>
<accession>Q5L5N9</accession>
<organism>
    <name type="scientific">Chlamydia abortus (strain DSM 27085 / S26/3)</name>
    <name type="common">Chlamydophila abortus</name>
    <dbReference type="NCBI Taxonomy" id="218497"/>
    <lineage>
        <taxon>Bacteria</taxon>
        <taxon>Pseudomonadati</taxon>
        <taxon>Chlamydiota</taxon>
        <taxon>Chlamydiia</taxon>
        <taxon>Chlamydiales</taxon>
        <taxon>Chlamydiaceae</taxon>
        <taxon>Chlamydia/Chlamydophila group</taxon>
        <taxon>Chlamydia</taxon>
    </lineage>
</organism>
<evidence type="ECO:0000255" key="1">
    <source>
        <dbReference type="HAMAP-Rule" id="MF_00758"/>
    </source>
</evidence>